<keyword id="KW-0687">Ribonucleoprotein</keyword>
<keyword id="KW-0689">Ribosomal protein</keyword>
<keyword id="KW-0694">RNA-binding</keyword>
<keyword id="KW-0699">rRNA-binding</keyword>
<dbReference type="EMBL" id="CP001025">
    <property type="protein sequence ID" value="ACB62778.1"/>
    <property type="molecule type" value="Genomic_DNA"/>
</dbReference>
<dbReference type="RefSeq" id="WP_006477192.1">
    <property type="nucleotide sequence ID" value="NC_010551.1"/>
</dbReference>
<dbReference type="SMR" id="B1YRD1"/>
<dbReference type="GeneID" id="93084317"/>
<dbReference type="KEGG" id="bac:BamMC406_0277"/>
<dbReference type="HOGENOM" id="CLU_041575_5_2_4"/>
<dbReference type="OrthoDB" id="9803201at2"/>
<dbReference type="Proteomes" id="UP000001680">
    <property type="component" value="Chromosome 1"/>
</dbReference>
<dbReference type="GO" id="GO:1990904">
    <property type="term" value="C:ribonucleoprotein complex"/>
    <property type="evidence" value="ECO:0007669"/>
    <property type="project" value="UniProtKB-KW"/>
</dbReference>
<dbReference type="GO" id="GO:0005840">
    <property type="term" value="C:ribosome"/>
    <property type="evidence" value="ECO:0007669"/>
    <property type="project" value="UniProtKB-KW"/>
</dbReference>
<dbReference type="GO" id="GO:0019843">
    <property type="term" value="F:rRNA binding"/>
    <property type="evidence" value="ECO:0007669"/>
    <property type="project" value="UniProtKB-UniRule"/>
</dbReference>
<dbReference type="GO" id="GO:0003735">
    <property type="term" value="F:structural constituent of ribosome"/>
    <property type="evidence" value="ECO:0007669"/>
    <property type="project" value="InterPro"/>
</dbReference>
<dbReference type="GO" id="GO:0006412">
    <property type="term" value="P:translation"/>
    <property type="evidence" value="ECO:0007669"/>
    <property type="project" value="UniProtKB-UniRule"/>
</dbReference>
<dbReference type="Gene3D" id="3.40.1370.10">
    <property type="match status" value="1"/>
</dbReference>
<dbReference type="HAMAP" id="MF_01328_B">
    <property type="entry name" value="Ribosomal_uL4_B"/>
    <property type="match status" value="1"/>
</dbReference>
<dbReference type="InterPro" id="IPR002136">
    <property type="entry name" value="Ribosomal_uL4"/>
</dbReference>
<dbReference type="InterPro" id="IPR013005">
    <property type="entry name" value="Ribosomal_uL4-like"/>
</dbReference>
<dbReference type="InterPro" id="IPR023574">
    <property type="entry name" value="Ribosomal_uL4_dom_sf"/>
</dbReference>
<dbReference type="NCBIfam" id="TIGR03953">
    <property type="entry name" value="rplD_bact"/>
    <property type="match status" value="1"/>
</dbReference>
<dbReference type="PANTHER" id="PTHR10746">
    <property type="entry name" value="50S RIBOSOMAL PROTEIN L4"/>
    <property type="match status" value="1"/>
</dbReference>
<dbReference type="PANTHER" id="PTHR10746:SF6">
    <property type="entry name" value="LARGE RIBOSOMAL SUBUNIT PROTEIN UL4M"/>
    <property type="match status" value="1"/>
</dbReference>
<dbReference type="Pfam" id="PF00573">
    <property type="entry name" value="Ribosomal_L4"/>
    <property type="match status" value="1"/>
</dbReference>
<dbReference type="SUPFAM" id="SSF52166">
    <property type="entry name" value="Ribosomal protein L4"/>
    <property type="match status" value="1"/>
</dbReference>
<feature type="chain" id="PRO_1000142089" description="Large ribosomal subunit protein uL4">
    <location>
        <begin position="1"/>
        <end position="206"/>
    </location>
</feature>
<feature type="region of interest" description="Disordered" evidence="2">
    <location>
        <begin position="45"/>
        <end position="78"/>
    </location>
</feature>
<feature type="compositionally biased region" description="Basic residues" evidence="2">
    <location>
        <begin position="58"/>
        <end position="70"/>
    </location>
</feature>
<accession>B1YRD1</accession>
<name>RL4_BURA4</name>
<comment type="function">
    <text evidence="1">One of the primary rRNA binding proteins, this protein initially binds near the 5'-end of the 23S rRNA. It is important during the early stages of 50S assembly. It makes multiple contacts with different domains of the 23S rRNA in the assembled 50S subunit and ribosome.</text>
</comment>
<comment type="function">
    <text evidence="1">Forms part of the polypeptide exit tunnel.</text>
</comment>
<comment type="subunit">
    <text evidence="1">Part of the 50S ribosomal subunit.</text>
</comment>
<comment type="similarity">
    <text evidence="1">Belongs to the universal ribosomal protein uL4 family.</text>
</comment>
<proteinExistence type="inferred from homology"/>
<sequence length="206" mass="22994">MELKLLNENGQEGAVVNASDVVFGRDYNEALIHQVVVAYQANARQGNRAQKDREQVKHTTKKPWRQKGTGRARAGMSSSPLWRGGGRIFPNSPEENFSHKVNKKMHRAGLCSIFSQLAREGRLSVVEDIILEAPKTKLLADKFKTMGLDSVLIITDTVDENLYLASRNLPHVAIVEPRYADPLSLIYFKKVLVTKAAVAQIEELLS</sequence>
<organism>
    <name type="scientific">Burkholderia ambifaria (strain MC40-6)</name>
    <dbReference type="NCBI Taxonomy" id="398577"/>
    <lineage>
        <taxon>Bacteria</taxon>
        <taxon>Pseudomonadati</taxon>
        <taxon>Pseudomonadota</taxon>
        <taxon>Betaproteobacteria</taxon>
        <taxon>Burkholderiales</taxon>
        <taxon>Burkholderiaceae</taxon>
        <taxon>Burkholderia</taxon>
        <taxon>Burkholderia cepacia complex</taxon>
    </lineage>
</organism>
<reference key="1">
    <citation type="submission" date="2008-04" db="EMBL/GenBank/DDBJ databases">
        <title>Complete sequence of chromosome 1 of Burkholderia ambifaria MC40-6.</title>
        <authorList>
            <person name="Copeland A."/>
            <person name="Lucas S."/>
            <person name="Lapidus A."/>
            <person name="Glavina del Rio T."/>
            <person name="Dalin E."/>
            <person name="Tice H."/>
            <person name="Pitluck S."/>
            <person name="Chain P."/>
            <person name="Malfatti S."/>
            <person name="Shin M."/>
            <person name="Vergez L."/>
            <person name="Lang D."/>
            <person name="Schmutz J."/>
            <person name="Larimer F."/>
            <person name="Land M."/>
            <person name="Hauser L."/>
            <person name="Kyrpides N."/>
            <person name="Lykidis A."/>
            <person name="Ramette A."/>
            <person name="Konstantinidis K."/>
            <person name="Tiedje J."/>
            <person name="Richardson P."/>
        </authorList>
    </citation>
    <scope>NUCLEOTIDE SEQUENCE [LARGE SCALE GENOMIC DNA]</scope>
    <source>
        <strain>MC40-6</strain>
    </source>
</reference>
<evidence type="ECO:0000255" key="1">
    <source>
        <dbReference type="HAMAP-Rule" id="MF_01328"/>
    </source>
</evidence>
<evidence type="ECO:0000256" key="2">
    <source>
        <dbReference type="SAM" id="MobiDB-lite"/>
    </source>
</evidence>
<evidence type="ECO:0000305" key="3"/>
<gene>
    <name evidence="1" type="primary">rplD</name>
    <name type="ordered locus">BamMC406_0277</name>
</gene>
<protein>
    <recommendedName>
        <fullName evidence="1">Large ribosomal subunit protein uL4</fullName>
    </recommendedName>
    <alternativeName>
        <fullName evidence="3">50S ribosomal protein L4</fullName>
    </alternativeName>
</protein>